<keyword id="KW-0227">DNA damage</keyword>
<keyword id="KW-0233">DNA recombination</keyword>
<keyword id="KW-0234">DNA repair</keyword>
<keyword id="KW-0479">Metal-binding</keyword>
<keyword id="KW-1185">Reference proteome</keyword>
<keyword id="KW-0862">Zinc</keyword>
<keyword id="KW-0863">Zinc-finger</keyword>
<sequence length="201" mass="21237">MSRAVAGPEIERLIQLLGRLPGLGPRSARRATLHLIKKRETLMAPLGLALQDVLGKIVECQVCGNVDVRDPCTVCTDIHRDSSVLVVVAEVADLWALERANAINAKYHVLGGVLSPLDGVGPDDLNLTKLVERVGAGGVNEVILALGATVDAQTTAHYVTDLLRETGVKVTRLAHGVPVGGELDHLDEGTLSAAIRARTAL</sequence>
<dbReference type="EMBL" id="AP009384">
    <property type="protein sequence ID" value="BAF86145.1"/>
    <property type="molecule type" value="Genomic_DNA"/>
</dbReference>
<dbReference type="RefSeq" id="WP_012168678.1">
    <property type="nucleotide sequence ID" value="NC_009937.1"/>
</dbReference>
<dbReference type="SMR" id="A8IGX4"/>
<dbReference type="STRING" id="438753.AZC_0147"/>
<dbReference type="KEGG" id="azc:AZC_0147"/>
<dbReference type="eggNOG" id="COG0353">
    <property type="taxonomic scope" value="Bacteria"/>
</dbReference>
<dbReference type="HOGENOM" id="CLU_060739_1_1_5"/>
<dbReference type="Proteomes" id="UP000000270">
    <property type="component" value="Chromosome"/>
</dbReference>
<dbReference type="GO" id="GO:0003677">
    <property type="term" value="F:DNA binding"/>
    <property type="evidence" value="ECO:0007669"/>
    <property type="project" value="UniProtKB-UniRule"/>
</dbReference>
<dbReference type="GO" id="GO:0008270">
    <property type="term" value="F:zinc ion binding"/>
    <property type="evidence" value="ECO:0007669"/>
    <property type="project" value="UniProtKB-KW"/>
</dbReference>
<dbReference type="GO" id="GO:0006310">
    <property type="term" value="P:DNA recombination"/>
    <property type="evidence" value="ECO:0007669"/>
    <property type="project" value="UniProtKB-UniRule"/>
</dbReference>
<dbReference type="GO" id="GO:0006281">
    <property type="term" value="P:DNA repair"/>
    <property type="evidence" value="ECO:0007669"/>
    <property type="project" value="UniProtKB-UniRule"/>
</dbReference>
<dbReference type="CDD" id="cd01025">
    <property type="entry name" value="TOPRIM_recR"/>
    <property type="match status" value="1"/>
</dbReference>
<dbReference type="Gene3D" id="3.40.1360.10">
    <property type="match status" value="1"/>
</dbReference>
<dbReference type="Gene3D" id="6.10.250.240">
    <property type="match status" value="1"/>
</dbReference>
<dbReference type="Gene3D" id="1.10.8.420">
    <property type="entry name" value="RecR Domain 1"/>
    <property type="match status" value="1"/>
</dbReference>
<dbReference type="HAMAP" id="MF_00017">
    <property type="entry name" value="RecR"/>
    <property type="match status" value="1"/>
</dbReference>
<dbReference type="InterPro" id="IPR000093">
    <property type="entry name" value="DNA_Rcmb_RecR"/>
</dbReference>
<dbReference type="InterPro" id="IPR023627">
    <property type="entry name" value="Rcmb_RecR"/>
</dbReference>
<dbReference type="InterPro" id="IPR015967">
    <property type="entry name" value="Rcmb_RecR_Znf"/>
</dbReference>
<dbReference type="InterPro" id="IPR006171">
    <property type="entry name" value="TOPRIM_dom"/>
</dbReference>
<dbReference type="InterPro" id="IPR034137">
    <property type="entry name" value="TOPRIM_RecR"/>
</dbReference>
<dbReference type="NCBIfam" id="TIGR00615">
    <property type="entry name" value="recR"/>
    <property type="match status" value="1"/>
</dbReference>
<dbReference type="PANTHER" id="PTHR30446">
    <property type="entry name" value="RECOMBINATION PROTEIN RECR"/>
    <property type="match status" value="1"/>
</dbReference>
<dbReference type="PANTHER" id="PTHR30446:SF0">
    <property type="entry name" value="RECOMBINATION PROTEIN RECR"/>
    <property type="match status" value="1"/>
</dbReference>
<dbReference type="Pfam" id="PF21175">
    <property type="entry name" value="RecR_C"/>
    <property type="match status" value="1"/>
</dbReference>
<dbReference type="Pfam" id="PF21176">
    <property type="entry name" value="RecR_HhH"/>
    <property type="match status" value="1"/>
</dbReference>
<dbReference type="Pfam" id="PF02132">
    <property type="entry name" value="RecR_ZnF"/>
    <property type="match status" value="1"/>
</dbReference>
<dbReference type="Pfam" id="PF13662">
    <property type="entry name" value="Toprim_4"/>
    <property type="match status" value="1"/>
</dbReference>
<dbReference type="SUPFAM" id="SSF111304">
    <property type="entry name" value="Recombination protein RecR"/>
    <property type="match status" value="1"/>
</dbReference>
<dbReference type="PROSITE" id="PS01300">
    <property type="entry name" value="RECR"/>
    <property type="match status" value="1"/>
</dbReference>
<dbReference type="PROSITE" id="PS50880">
    <property type="entry name" value="TOPRIM"/>
    <property type="match status" value="1"/>
</dbReference>
<evidence type="ECO:0000255" key="1">
    <source>
        <dbReference type="HAMAP-Rule" id="MF_00017"/>
    </source>
</evidence>
<name>RECR_AZOC5</name>
<gene>
    <name evidence="1" type="primary">recR</name>
    <name type="ordered locus">AZC_0147</name>
</gene>
<accession>A8IGX4</accession>
<organism>
    <name type="scientific">Azorhizobium caulinodans (strain ATCC 43989 / DSM 5975 / JCM 20966 / LMG 6465 / NBRC 14845 / NCIMB 13405 / ORS 571)</name>
    <dbReference type="NCBI Taxonomy" id="438753"/>
    <lineage>
        <taxon>Bacteria</taxon>
        <taxon>Pseudomonadati</taxon>
        <taxon>Pseudomonadota</taxon>
        <taxon>Alphaproteobacteria</taxon>
        <taxon>Hyphomicrobiales</taxon>
        <taxon>Xanthobacteraceae</taxon>
        <taxon>Azorhizobium</taxon>
    </lineage>
</organism>
<comment type="function">
    <text evidence="1">May play a role in DNA repair. It seems to be involved in an RecBC-independent recombinational process of DNA repair. It may act with RecF and RecO.</text>
</comment>
<comment type="similarity">
    <text evidence="1">Belongs to the RecR family.</text>
</comment>
<feature type="chain" id="PRO_0000322863" description="Recombination protein RecR">
    <location>
        <begin position="1"/>
        <end position="201"/>
    </location>
</feature>
<feature type="domain" description="Toprim" evidence="1">
    <location>
        <begin position="83"/>
        <end position="178"/>
    </location>
</feature>
<feature type="zinc finger region" description="C4-type" evidence="1">
    <location>
        <begin position="60"/>
        <end position="75"/>
    </location>
</feature>
<proteinExistence type="inferred from homology"/>
<protein>
    <recommendedName>
        <fullName evidence="1">Recombination protein RecR</fullName>
    </recommendedName>
</protein>
<reference key="1">
    <citation type="submission" date="2007-04" db="EMBL/GenBank/DDBJ databases">
        <title>Complete genome sequence of the nitrogen-fixing bacterium Azorhizobium caulinodans ORS571.</title>
        <authorList>
            <person name="Lee K.B."/>
            <person name="Backer P.D."/>
            <person name="Aono T."/>
            <person name="Liu C.T."/>
            <person name="Suzuki S."/>
            <person name="Suzuki T."/>
            <person name="Kaneko T."/>
            <person name="Yamada M."/>
            <person name="Tabata S."/>
            <person name="Kupfer D.M."/>
            <person name="Najar F.Z."/>
            <person name="Wiley G.B."/>
            <person name="Roe B."/>
            <person name="Binnewies T."/>
            <person name="Ussery D."/>
            <person name="Vereecke D."/>
            <person name="Gevers D."/>
            <person name="Holsters M."/>
            <person name="Oyaizu H."/>
        </authorList>
    </citation>
    <scope>NUCLEOTIDE SEQUENCE [LARGE SCALE GENOMIC DNA]</scope>
    <source>
        <strain>ATCC 43989 / DSM 5975 / JCM 20966 / LMG 6465 / NBRC 14845 / NCIMB 13405 / ORS 571</strain>
    </source>
</reference>